<gene>
    <name evidence="5" type="primary">OMT12</name>
    <name evidence="4" type="synonym">OMT10</name>
</gene>
<sequence>MAEIPTSSNPSDDPETQKLNGNEEDYDHHHDEDPESDDENYEYALQIAEMLPFPMVMQTAIELDLLGIIATAGPDRQLSAAEIAAALPAAGNPDAPAMLDRMLYLLATYSVVTCTAVDGGASGGVVRKYGLAPVAKYFVSNEDGVSLGALISLNQGQAFLASWSKLKEAVLEGGIPFNKVHGMDVFHYQGTDPRFNKIFNKAMYGQSTYIIKKIVRRYKGFENIQRLVDVGGGLGHTLRVITSNYPSIKGINFDLPHVIQHAPTIPGVEHVGGDMFESIPNGDAIFMKCILHDWSDEHCLKTLKNCYKALPRKGKVIVVQMNMIEEPQTTPLAKAISQLDVCLMTQSPGGKERTRREFQTLAEAAGFAEFNPVCHVAGFWVMEFLK</sequence>
<accession>A0AA51Z0J6</accession>
<dbReference type="EC" id="2.1.1.-" evidence="2 3"/>
<dbReference type="EMBL" id="OQ831042">
    <property type="protein sequence ID" value="WMX25285.1"/>
    <property type="molecule type" value="mRNA"/>
</dbReference>
<dbReference type="EMBL" id="PP839063">
    <property type="protein sequence ID" value="XBD97126.1"/>
    <property type="molecule type" value="mRNA"/>
</dbReference>
<dbReference type="GO" id="GO:0008171">
    <property type="term" value="F:O-methyltransferase activity"/>
    <property type="evidence" value="ECO:0007669"/>
    <property type="project" value="InterPro"/>
</dbReference>
<dbReference type="GO" id="GO:0046983">
    <property type="term" value="F:protein dimerization activity"/>
    <property type="evidence" value="ECO:0007669"/>
    <property type="project" value="InterPro"/>
</dbReference>
<dbReference type="GO" id="GO:0032259">
    <property type="term" value="P:methylation"/>
    <property type="evidence" value="ECO:0007669"/>
    <property type="project" value="UniProtKB-KW"/>
</dbReference>
<dbReference type="CDD" id="cd02440">
    <property type="entry name" value="AdoMet_MTases"/>
    <property type="match status" value="1"/>
</dbReference>
<dbReference type="FunFam" id="1.10.10.10:FF:000357">
    <property type="entry name" value="Caffeic acid 3-O-methyltransferase"/>
    <property type="match status" value="1"/>
</dbReference>
<dbReference type="FunFam" id="3.40.50.150:FF:000061">
    <property type="entry name" value="Caffeic acid O-methyltransferase"/>
    <property type="match status" value="1"/>
</dbReference>
<dbReference type="Gene3D" id="3.40.50.150">
    <property type="entry name" value="Vaccinia Virus protein VP39"/>
    <property type="match status" value="1"/>
</dbReference>
<dbReference type="Gene3D" id="1.10.10.10">
    <property type="entry name" value="Winged helix-like DNA-binding domain superfamily/Winged helix DNA-binding domain"/>
    <property type="match status" value="1"/>
</dbReference>
<dbReference type="InterPro" id="IPR016461">
    <property type="entry name" value="COMT-like"/>
</dbReference>
<dbReference type="InterPro" id="IPR001077">
    <property type="entry name" value="O_MeTrfase_dom"/>
</dbReference>
<dbReference type="InterPro" id="IPR012967">
    <property type="entry name" value="Plant_O-MeTrfase_dimerisation"/>
</dbReference>
<dbReference type="InterPro" id="IPR029063">
    <property type="entry name" value="SAM-dependent_MTases_sf"/>
</dbReference>
<dbReference type="InterPro" id="IPR036388">
    <property type="entry name" value="WH-like_DNA-bd_sf"/>
</dbReference>
<dbReference type="InterPro" id="IPR036390">
    <property type="entry name" value="WH_DNA-bd_sf"/>
</dbReference>
<dbReference type="PANTHER" id="PTHR11746">
    <property type="entry name" value="O-METHYLTRANSFERASE"/>
    <property type="match status" value="1"/>
</dbReference>
<dbReference type="Pfam" id="PF08100">
    <property type="entry name" value="Dimerisation"/>
    <property type="match status" value="1"/>
</dbReference>
<dbReference type="Pfam" id="PF00891">
    <property type="entry name" value="Methyltransf_2"/>
    <property type="match status" value="1"/>
</dbReference>
<dbReference type="PIRSF" id="PIRSF005739">
    <property type="entry name" value="O-mtase"/>
    <property type="match status" value="1"/>
</dbReference>
<dbReference type="SUPFAM" id="SSF53335">
    <property type="entry name" value="S-adenosyl-L-methionine-dependent methyltransferases"/>
    <property type="match status" value="1"/>
</dbReference>
<dbReference type="SUPFAM" id="SSF46785">
    <property type="entry name" value="Winged helix' DNA-binding domain"/>
    <property type="match status" value="1"/>
</dbReference>
<dbReference type="PROSITE" id="PS51683">
    <property type="entry name" value="SAM_OMT_II"/>
    <property type="match status" value="1"/>
</dbReference>
<comment type="function">
    <text evidence="3">O-methyltransferase participating in the biosynthesis of natural products derived from phenylethylamine, including mescaline, a natural hallucinogen potentially used in psychotherapeutic treatments (PubMed:37675639). Catalyzes the O-methylation of dopamine, 4-hydroxy-3,5-dimethoxyphenethylamine, 4,5-dihydroxy-3-methoxyphenethylamine and N-methyl-4,5-dihydroxy-3-methoxyphenethylamine (PubMed:37675639). Also involved in the conversion of N-methyl-4-hydroxy-3,5-dimethoxyphenethylamine to N-methylmescaline (PubMed:37675639).</text>
</comment>
<comment type="catalytic activity">
    <reaction evidence="3">
        <text>4-hydroxy-3,5-dimethoxyphenethylamine + S-adenosyl-L-methionine = mescaline + S-adenosyl-L-homocysteine + H(+)</text>
        <dbReference type="Rhea" id="RHEA:81059"/>
        <dbReference type="ChEBI" id="CHEBI:15378"/>
        <dbReference type="ChEBI" id="CHEBI:57856"/>
        <dbReference type="ChEBI" id="CHEBI:59789"/>
        <dbReference type="ChEBI" id="CHEBI:231762"/>
        <dbReference type="ChEBI" id="CHEBI:231768"/>
    </reaction>
    <physiologicalReaction direction="left-to-right" evidence="3">
        <dbReference type="Rhea" id="RHEA:81060"/>
    </physiologicalReaction>
</comment>
<comment type="catalytic activity">
    <reaction evidence="3">
        <text>dopamine + S-adenosyl-L-methionine = 4-methoxytyramine + S-adenosyl-L-homocysteine + H(+)</text>
        <dbReference type="Rhea" id="RHEA:81047"/>
        <dbReference type="ChEBI" id="CHEBI:15378"/>
        <dbReference type="ChEBI" id="CHEBI:57856"/>
        <dbReference type="ChEBI" id="CHEBI:59789"/>
        <dbReference type="ChEBI" id="CHEBI:59905"/>
        <dbReference type="ChEBI" id="CHEBI:192993"/>
    </reaction>
    <physiologicalReaction direction="left-to-right" evidence="3">
        <dbReference type="Rhea" id="RHEA:81048"/>
    </physiologicalReaction>
</comment>
<comment type="biophysicochemical properties">
    <kinetics>
        <KM evidence="3">23.7 uM for 3-methoxy-4,5-dihydroxyphenethylamine</KM>
        <KM evidence="3">11.3 uM for S-adenosyl-L-methionine</KM>
        <Vmax evidence="3">507.0 nmol/min/mg enzyme with 3-methoxy-4,5-dihydroxyphenethylamine as substrate</Vmax>
        <Vmax evidence="3">405.0 nmol/min/mg enzyme with S-adenosyl-L-methionine as substrate</Vmax>
        <text evidence="3">kcat is 0.360 sec(-1) with 3-methoxy-4,5-dihydroxyphenethylamine as substrate (PubMed:37675639). kcat is 0.288 sec(-1) with S-adenosyl-L-methionine as substrate (PubMed:37675639).</text>
    </kinetics>
    <phDependence>
        <text evidence="3">Optimum pH is 7.5-8.</text>
    </phDependence>
    <temperatureDependence>
        <text evidence="3">Optimum temperature is 45 degrees Celsius.</text>
    </temperatureDependence>
</comment>
<comment type="pathway">
    <text evidence="3">Aromatic compound metabolism.</text>
</comment>
<comment type="pathway">
    <text evidence="3">Alkaloid biosynthesis.</text>
</comment>
<comment type="subunit">
    <text evidence="1">Homodimer.</text>
</comment>
<comment type="tissue specificity">
    <text evidence="3">Expressed at high levels in all tissues.</text>
</comment>
<comment type="similarity">
    <text evidence="2">Belongs to the class I-like SAM-binding methyltransferase superfamily. Cation-independent O-methyltransferase family.</text>
</comment>
<proteinExistence type="evidence at protein level"/>
<protein>
    <recommendedName>
        <fullName evidence="5">O-methyltransferase 12</fullName>
        <shortName evidence="5">LwOMT12</shortName>
        <ecNumber evidence="2 3">2.1.1.-</ecNumber>
    </recommendedName>
    <alternativeName>
        <fullName evidence="4">O-methyltransferase 10</fullName>
        <shortName evidence="4">LwOMT10</shortName>
    </alternativeName>
</protein>
<name>OMT12_LOPWI</name>
<keyword id="KW-0017">Alkaloid metabolism</keyword>
<keyword id="KW-0489">Methyltransferase</keyword>
<keyword id="KW-0949">S-adenosyl-L-methionine</keyword>
<keyword id="KW-0808">Transferase</keyword>
<feature type="chain" id="PRO_0000462563" description="O-methyltransferase 12">
    <location>
        <begin position="1"/>
        <end position="386"/>
    </location>
</feature>
<feature type="active site" description="Proton acceptor" evidence="2">
    <location>
        <position position="292"/>
    </location>
</feature>
<feature type="binding site" evidence="1">
    <location>
        <position position="207"/>
    </location>
    <ligand>
        <name>S-adenosyl-L-homocysteine</name>
        <dbReference type="ChEBI" id="CHEBI:57856"/>
    </ligand>
</feature>
<feature type="binding site" evidence="1">
    <location>
        <position position="231"/>
    </location>
    <ligand>
        <name>S-adenosyl-L-homocysteine</name>
        <dbReference type="ChEBI" id="CHEBI:57856"/>
    </ligand>
</feature>
<feature type="binding site" evidence="1">
    <location>
        <position position="254"/>
    </location>
    <ligand>
        <name>S-adenosyl-L-homocysteine</name>
        <dbReference type="ChEBI" id="CHEBI:57856"/>
    </ligand>
</feature>
<feature type="binding site" evidence="2">
    <location>
        <position position="254"/>
    </location>
    <ligand>
        <name>S-adenosyl-L-methionine</name>
        <dbReference type="ChEBI" id="CHEBI:59789"/>
    </ligand>
</feature>
<feature type="binding site" evidence="1">
    <location>
        <position position="274"/>
    </location>
    <ligand>
        <name>S-adenosyl-L-homocysteine</name>
        <dbReference type="ChEBI" id="CHEBI:57856"/>
    </ligand>
</feature>
<feature type="binding site" evidence="1">
    <location>
        <position position="288"/>
    </location>
    <ligand>
        <name>S-adenosyl-L-homocysteine</name>
        <dbReference type="ChEBI" id="CHEBI:57856"/>
    </ligand>
</feature>
<evidence type="ECO:0000250" key="1">
    <source>
        <dbReference type="UniProtKB" id="A0A166U5H3"/>
    </source>
</evidence>
<evidence type="ECO:0000255" key="2">
    <source>
        <dbReference type="PROSITE-ProRule" id="PRU01020"/>
    </source>
</evidence>
<evidence type="ECO:0000269" key="3">
    <source>
    </source>
</evidence>
<evidence type="ECO:0000303" key="4">
    <source>
    </source>
</evidence>
<evidence type="ECO:0000303" key="5">
    <source>
    </source>
</evidence>
<evidence type="ECO:0000312" key="6">
    <source>
        <dbReference type="EMBL" id="WMX25285.1"/>
    </source>
</evidence>
<evidence type="ECO:0000312" key="7">
    <source>
        <dbReference type="EMBL" id="XBD97126.1"/>
    </source>
</evidence>
<reference evidence="6" key="1">
    <citation type="journal article" date="2023" name="Plant J.">
        <title>Elucidation of the mescaline biosynthetic pathway in peyote (Lophophora williamsii).</title>
        <authorList>
            <person name="Watkins J.L."/>
            <person name="Li Q."/>
            <person name="Yeaman S."/>
            <person name="Facchini P.J."/>
        </authorList>
    </citation>
    <scope>NUCLEOTIDE SEQUENCE [MRNA]</scope>
    <scope>FUNCTION</scope>
    <scope>CATALYTIC ACTIVITY</scope>
    <scope>PATHWAY</scope>
    <scope>TISSUE SPECIFICITY</scope>
    <scope>BIOPHYSICOCHEMICAL PROPERTIES</scope>
    <source>
        <strain>cv. Jourdaniana</strain>
    </source>
</reference>
<reference evidence="7" key="2">
    <citation type="journal article" date="2024" name="Mol. Plant">
        <title>The biosynthetic pathway of the hallucinogen mescaline and its heterologous reconstruction.</title>
        <authorList>
            <person name="Berman P."/>
            <person name="de Haro L.A."/>
            <person name="Cavaco A.-R."/>
            <person name="Panda S."/>
            <person name="Dong Y."/>
            <person name="Kuzmich N."/>
            <person name="Lichtenstein G."/>
            <person name="Peleg Y."/>
            <person name="Harat H."/>
            <person name="Jozwiak A."/>
            <person name="Cai J."/>
            <person name="Heinig U."/>
            <person name="Meir S."/>
            <person name="Rogachev I."/>
            <person name="Aharoni A."/>
        </authorList>
    </citation>
    <scope>NUCLEOTIDE SEQUENCE [MRNA]</scope>
    <source>
        <strain>cv. Rehovot 7</strain>
    </source>
</reference>
<organism>
    <name type="scientific">Lophophora williamsii</name>
    <name type="common">Peyote</name>
    <name type="synonym">Echinocactus williamsii</name>
    <dbReference type="NCBI Taxonomy" id="130138"/>
    <lineage>
        <taxon>Eukaryota</taxon>
        <taxon>Viridiplantae</taxon>
        <taxon>Streptophyta</taxon>
        <taxon>Embryophyta</taxon>
        <taxon>Tracheophyta</taxon>
        <taxon>Spermatophyta</taxon>
        <taxon>Magnoliopsida</taxon>
        <taxon>eudicotyledons</taxon>
        <taxon>Gunneridae</taxon>
        <taxon>Pentapetalae</taxon>
        <taxon>Caryophyllales</taxon>
        <taxon>Cactineae</taxon>
        <taxon>Cactaceae</taxon>
        <taxon>Cactoideae</taxon>
        <taxon>Cacteae</taxon>
        <taxon>Lophophora</taxon>
    </lineage>
</organism>